<protein>
    <recommendedName>
        <fullName evidence="3">N-formylglutamate deformylase</fullName>
        <ecNumber evidence="1">3.5.1.68</ecNumber>
    </recommendedName>
    <alternativeName>
        <fullName evidence="2">Formylglutamate amidohydrolase</fullName>
        <shortName evidence="2">FGase</shortName>
    </alternativeName>
</protein>
<accession>O31201</accession>
<comment type="function">
    <text evidence="1">Catalyzes the hydrolysis of N-formyl-L-glutamate to formate and L-glutamate.</text>
</comment>
<comment type="catalytic activity">
    <reaction evidence="1">
        <text>N-formyl-L-glutamate + H2O = formate + L-glutamate</text>
        <dbReference type="Rhea" id="RHEA:12476"/>
        <dbReference type="ChEBI" id="CHEBI:15377"/>
        <dbReference type="ChEBI" id="CHEBI:15740"/>
        <dbReference type="ChEBI" id="CHEBI:17684"/>
        <dbReference type="ChEBI" id="CHEBI:29985"/>
        <dbReference type="EC" id="3.5.1.68"/>
    </reaction>
    <physiologicalReaction direction="left-to-right" evidence="1">
        <dbReference type="Rhea" id="RHEA:12477"/>
    </physiologicalReaction>
</comment>
<comment type="activity regulation">
    <text evidence="1">Stimulated by Co(2+) (PubMed:3308850). Fe(2+) is also a good activator, particularly at lower concentrations, but it inhibits slightly the activity when used at concentrations over 0.1 mM (PubMed:3308850). Other divalent metals tested (Cd(2+), Ca(2+), Mn(2+), Zn(2+), Ni(2+) and Mg(2+)) are not effective activators (PubMed:3308850).</text>
</comment>
<comment type="biophysicochemical properties">
    <kinetics>
        <KM evidence="1">14 mM for N-formyl-L-glutamate</KM>
    </kinetics>
    <phDependence>
        <text evidence="1">Optimum pH is 7.5 (PubMed:3308850). Retains over 65% of its maximum activity between pH 6.6 and 8.5 (PubMed:3308850).</text>
    </phDependence>
</comment>
<comment type="pathway">
    <text evidence="4">Amino-acid degradation; L-histidine degradation into L-glutamate; L-glutamate from N-formimidoyl-L-glutamate (deiminase route): step 2/2.</text>
</comment>
<comment type="subunit">
    <text evidence="1">Monomer.</text>
</comment>
<comment type="induction">
    <text evidence="1">Induced by either urocanate or N-formyl-L-glutamate.</text>
</comment>
<comment type="similarity">
    <text evidence="3">Belongs to the N-formylglutamate deformylase family.</text>
</comment>
<sequence length="267" mass="30294">MDKVLSFHQGRLPLLISMPHAGLRLSDAVRDGLVEEARSLPDTDWHIPQLYDFARDLGASVVAAEYSRFVIDLNRPDDDKPLYAGATTGLYPATLFEGEPLFKEGLAPSGEERKRYLEQIWRPYHGTLRRELDRLREQFGYALLWDAHSIRSHIPHLFDGKLPDFNLGTFNGASCDPVLAERLQGVCAEATGYSHVLNGRFKGGHITRHYGDPAKHIHAVQLELAQSTYMEETEPFTYREDLAQPTQVVLKQLLQALLAWGAERYQR</sequence>
<reference key="1">
    <citation type="submission" date="1997-11" db="EMBL/GenBank/DDBJ databases">
        <title>Inducible Histidine transporter from Pseudomonas putida.</title>
        <authorList>
            <person name="Phillips A.T."/>
            <person name="Baker C.S."/>
        </authorList>
    </citation>
    <scope>NUCLEOTIDE SEQUENCE [GENOMIC DNA]</scope>
    <source>
        <strain>ATCC 12633 / DSM 291 / JCM 13063 / CCUG 12690 / LMG 2257 / NBRC 14164 / NCIMB 9494 / NCTC 10936 / VKM B-2187 / Stanier 90</strain>
    </source>
</reference>
<reference key="2">
    <citation type="journal article" date="1987" name="J. Bacteriol.">
        <title>Purification and properties of formylglutamate amidohydrolase from Pseudomonas putida.</title>
        <authorList>
            <person name="Hu L."/>
            <person name="Mulfinger L.M."/>
            <person name="Phillips A.T."/>
        </authorList>
    </citation>
    <scope>FUNCTION</scope>
    <scope>CATALYTIC ACTIVITY</scope>
    <scope>ACTIVITY REGULATION</scope>
    <scope>BIOPHYSICOCHEMICAL PROPERTIES</scope>
    <scope>SUBUNIT</scope>
    <scope>INDUCTION</scope>
    <source>
        <strain>ATCC 12633 / DSM 291 / JCM 13063 / CCUG 12690 / LMG 2257 / NBRC 14164 / NCIMB 9494 / NCTC 10936 / VKM B-2187 / Stanier 90</strain>
    </source>
</reference>
<feature type="chain" id="PRO_0000456688" description="N-formylglutamate deformylase">
    <location>
        <begin position="1"/>
        <end position="267"/>
    </location>
</feature>
<evidence type="ECO:0000269" key="1">
    <source>
    </source>
</evidence>
<evidence type="ECO:0000303" key="2">
    <source>
    </source>
</evidence>
<evidence type="ECO:0000305" key="3"/>
<evidence type="ECO:0000305" key="4">
    <source>
    </source>
</evidence>
<organism>
    <name type="scientific">Pseudomonas putida</name>
    <name type="common">Arthrobacter siderocapsulatus</name>
    <dbReference type="NCBI Taxonomy" id="303"/>
    <lineage>
        <taxon>Bacteria</taxon>
        <taxon>Pseudomonadati</taxon>
        <taxon>Pseudomonadota</taxon>
        <taxon>Gammaproteobacteria</taxon>
        <taxon>Pseudomonadales</taxon>
        <taxon>Pseudomonadaceae</taxon>
        <taxon>Pseudomonas</taxon>
    </lineage>
</organism>
<keyword id="KW-0369">Histidine metabolism</keyword>
<keyword id="KW-0378">Hydrolase</keyword>
<name>HUTG_PSEPU</name>
<gene>
    <name evidence="2" type="primary">hutG</name>
</gene>
<proteinExistence type="evidence at protein level"/>
<dbReference type="EC" id="3.5.1.68" evidence="1"/>
<dbReference type="EMBL" id="AF032970">
    <property type="protein sequence ID" value="AAB86969.1"/>
    <property type="molecule type" value="Genomic_DNA"/>
</dbReference>
<dbReference type="RefSeq" id="WP_016502002.1">
    <property type="nucleotide sequence ID" value="NZ_UGUX01000003.1"/>
</dbReference>
<dbReference type="SMR" id="O31201"/>
<dbReference type="GeneID" id="45526573"/>
<dbReference type="BioCyc" id="MetaCyc:MONOMER-11615"/>
<dbReference type="UniPathway" id="UPA00379">
    <property type="reaction ID" value="UER00554"/>
</dbReference>
<dbReference type="GO" id="GO:0016787">
    <property type="term" value="F:hydrolase activity"/>
    <property type="evidence" value="ECO:0007669"/>
    <property type="project" value="UniProtKB-KW"/>
</dbReference>
<dbReference type="GO" id="GO:0019556">
    <property type="term" value="P:L-histidine catabolic process to glutamate and formamide"/>
    <property type="evidence" value="ECO:0007669"/>
    <property type="project" value="UniProtKB-UniPathway"/>
</dbReference>
<dbReference type="GO" id="GO:0019557">
    <property type="term" value="P:L-histidine catabolic process to glutamate and formate"/>
    <property type="evidence" value="ECO:0007669"/>
    <property type="project" value="UniProtKB-UniPathway"/>
</dbReference>
<dbReference type="Gene3D" id="3.40.630.40">
    <property type="entry name" value="Zn-dependent exopeptidases"/>
    <property type="match status" value="1"/>
</dbReference>
<dbReference type="InterPro" id="IPR010247">
    <property type="entry name" value="HutG_amidohyd"/>
</dbReference>
<dbReference type="InterPro" id="IPR007709">
    <property type="entry name" value="N-FG_amidohydro"/>
</dbReference>
<dbReference type="NCBIfam" id="TIGR02017">
    <property type="entry name" value="hutG_amidohyd"/>
    <property type="match status" value="1"/>
</dbReference>
<dbReference type="Pfam" id="PF05013">
    <property type="entry name" value="FGase"/>
    <property type="match status" value="1"/>
</dbReference>
<dbReference type="SUPFAM" id="SSF53187">
    <property type="entry name" value="Zn-dependent exopeptidases"/>
    <property type="match status" value="1"/>
</dbReference>